<feature type="chain" id="PRO_0000420060" description="P3N-PIPO polyprotein">
    <location>
        <begin position="1"/>
        <end position="1228"/>
    </location>
</feature>
<feature type="chain" id="PRO_0000420061" description="P1 protease" evidence="1">
    <location>
        <begin position="1"/>
        <end position="547"/>
    </location>
</feature>
<feature type="chain" id="PRO_0000420062" description="Helper component proteinase" evidence="1">
    <location>
        <begin position="548"/>
        <end position="1004"/>
    </location>
</feature>
<feature type="chain" id="PRO_0000408542" description="Movement protein P3N-PIPO">
    <location>
        <begin position="1005"/>
        <end position="1228"/>
    </location>
</feature>
<feature type="domain" description="Peptidase S30" evidence="5">
    <location>
        <begin position="408"/>
        <end position="547"/>
    </location>
</feature>
<feature type="domain" description="Peptidase C6" evidence="4">
    <location>
        <begin position="882"/>
        <end position="1004"/>
    </location>
</feature>
<feature type="short sequence motif" description="Involved in interaction with stylet and aphid transmission" evidence="1">
    <location>
        <begin position="598"/>
        <end position="601"/>
    </location>
</feature>
<feature type="short sequence motif" description="Involved in virions binding and aphid transmission" evidence="1">
    <location>
        <begin position="856"/>
        <end position="858"/>
    </location>
</feature>
<feature type="active site" description="For P1 proteinase activity" evidence="5">
    <location>
        <position position="456"/>
    </location>
</feature>
<feature type="active site" description="For P1 proteinase activity" evidence="5">
    <location>
        <position position="465"/>
    </location>
</feature>
<feature type="active site" description="For P1 proteinase activity" evidence="5">
    <location>
        <position position="499"/>
    </location>
</feature>
<feature type="active site" description="For helper component proteinase activity" evidence="4">
    <location>
        <position position="890"/>
    </location>
</feature>
<feature type="active site" description="For helper component proteinase activity" evidence="4">
    <location>
        <position position="963"/>
    </location>
</feature>
<feature type="site" description="Cleavage; by P1 proteinase" evidence="5">
    <location>
        <begin position="547"/>
        <end position="548"/>
    </location>
</feature>
<feature type="site" description="Cleavage; by autolysis" evidence="4">
    <location>
        <begin position="1004"/>
        <end position="1005"/>
    </location>
</feature>
<feature type="unsure residue">
    <location>
        <begin position="1155"/>
        <end position="1161"/>
    </location>
</feature>
<dbReference type="EC" id="3.4.21.-"/>
<dbReference type="EC" id="3.4.22.45"/>
<dbReference type="EMBL" id="X67673">
    <property type="status" value="NOT_ANNOTATED_CDS"/>
    <property type="molecule type" value="Genomic_RNA"/>
</dbReference>
<dbReference type="EMBL" id="S46722">
    <property type="status" value="NOT_ANNOTATED_CDS"/>
    <property type="molecule type" value="Genomic_RNA"/>
</dbReference>
<dbReference type="SMR" id="P0CJ98"/>
<dbReference type="Proteomes" id="UP000006688">
    <property type="component" value="Segment"/>
</dbReference>
<dbReference type="Proteomes" id="UP000007380">
    <property type="component" value="Genome"/>
</dbReference>
<dbReference type="GO" id="GO:0044219">
    <property type="term" value="C:host cell plasmodesma"/>
    <property type="evidence" value="ECO:0007669"/>
    <property type="project" value="UniProtKB-SubCell"/>
</dbReference>
<dbReference type="GO" id="GO:0004197">
    <property type="term" value="F:cysteine-type endopeptidase activity"/>
    <property type="evidence" value="ECO:0007669"/>
    <property type="project" value="InterPro"/>
</dbReference>
<dbReference type="GO" id="GO:0008236">
    <property type="term" value="F:serine-type peptidase activity"/>
    <property type="evidence" value="ECO:0007669"/>
    <property type="project" value="UniProtKB-KW"/>
</dbReference>
<dbReference type="GO" id="GO:0006508">
    <property type="term" value="P:proteolysis"/>
    <property type="evidence" value="ECO:0007669"/>
    <property type="project" value="UniProtKB-KW"/>
</dbReference>
<dbReference type="GO" id="GO:0052170">
    <property type="term" value="P:symbiont-mediated suppression of host innate immune response"/>
    <property type="evidence" value="ECO:0007669"/>
    <property type="project" value="UniProtKB-KW"/>
</dbReference>
<dbReference type="GO" id="GO:0046740">
    <property type="term" value="P:transport of virus in host, cell to cell"/>
    <property type="evidence" value="ECO:0007669"/>
    <property type="project" value="UniProtKB-KW"/>
</dbReference>
<dbReference type="GO" id="GO:0075523">
    <property type="term" value="P:viral translational frameshifting"/>
    <property type="evidence" value="ECO:0007669"/>
    <property type="project" value="UniProtKB-KW"/>
</dbReference>
<dbReference type="Gene3D" id="3.90.70.150">
    <property type="entry name" value="Helper component proteinase"/>
    <property type="match status" value="1"/>
</dbReference>
<dbReference type="InterPro" id="IPR022199">
    <property type="entry name" value="DUF3725"/>
</dbReference>
<dbReference type="InterPro" id="IPR001456">
    <property type="entry name" value="HC-pro"/>
</dbReference>
<dbReference type="InterPro" id="IPR031159">
    <property type="entry name" value="HC_PRO_CPD_dom"/>
</dbReference>
<dbReference type="InterPro" id="IPR042308">
    <property type="entry name" value="HC_PRO_CPD_sf"/>
</dbReference>
<dbReference type="InterPro" id="IPR002540">
    <property type="entry name" value="Pept_S30_P1_potyvir"/>
</dbReference>
<dbReference type="InterPro" id="IPR039560">
    <property type="entry name" value="Potyvirid-P3"/>
</dbReference>
<dbReference type="Pfam" id="PF12523">
    <property type="entry name" value="DUF3725"/>
    <property type="match status" value="1"/>
</dbReference>
<dbReference type="Pfam" id="PF00851">
    <property type="entry name" value="Peptidase_C6"/>
    <property type="match status" value="1"/>
</dbReference>
<dbReference type="Pfam" id="PF01577">
    <property type="entry name" value="Peptidase_S30"/>
    <property type="match status" value="1"/>
</dbReference>
<dbReference type="Pfam" id="PF13608">
    <property type="entry name" value="Potyvirid-P3"/>
    <property type="match status" value="1"/>
</dbReference>
<dbReference type="PROSITE" id="PS51744">
    <property type="entry name" value="HC_PRO_CPD"/>
    <property type="match status" value="1"/>
</dbReference>
<dbReference type="PROSITE" id="PS51871">
    <property type="entry name" value="PV_P1_PRO"/>
    <property type="match status" value="1"/>
</dbReference>
<comment type="function">
    <molecule>Helper component proteinase</molecule>
    <text evidence="2">Required for aphid transmission and also has proteolytic activity. Only cleaves a Gly-Gly dipeptide at its own C-terminus. Interacts with virions and aphid stylets. Acts as a suppressor of RNA-mediated gene silencing, also known as post-transcriptional gene silencing (PTGS), a mechanism of plant viral defense that limits the accumulation of viral RNAs. May have RNA-binding activity.</text>
</comment>
<comment type="function">
    <molecule>Movement protein P3N-PIPO</molecule>
    <text evidence="3">Allows efficient cell to cell propagation, by bypassing the host cell wall barrier. Transports viral genome to neighboring plant cells directly through plasmosdesmata, without any budding.</text>
</comment>
<comment type="catalytic activity">
    <molecule>Helper component proteinase</molecule>
    <reaction>
        <text>Hydrolyzes a Gly-|-Gly bond at its own C-terminus, commonly in the sequence -Tyr-Xaa-Val-Gly-|-Gly, in the processing of the potyviral polyprotein.</text>
        <dbReference type="EC" id="3.4.22.45"/>
    </reaction>
</comment>
<comment type="subunit">
    <molecule>Movement protein P3N-PIPO</molecule>
    <text evidence="3">Interacts (via PIPO domain) with host PCaP1 protein; this interaction may help to anchor the movement complex to the plasma membrane from which the complex could move to the plasmodesmata.</text>
</comment>
<comment type="subcellular location">
    <molecule>Movement protein P3N-PIPO</molecule>
    <subcellularLocation>
        <location evidence="3">Host cell junction</location>
        <location evidence="3">Host plasmodesma</location>
    </subcellularLocation>
</comment>
<comment type="alternative products">
    <event type="ribosomal frameshifting"/>
    <isoform>
        <id>P0CJ98-1</id>
        <name>P3N-PIPO polyprotein</name>
        <sequence type="displayed"/>
    </isoform>
    <isoform>
        <id>Q01901-1</id>
        <name>Genome polyprotein</name>
        <sequence type="external"/>
    </isoform>
</comment>
<comment type="domain">
    <text evidence="1">The N-terminus of helper component proteinase is involved in interaction with stylets. The central part is involved in interaction with virions and the C-terminus is involved in cell-to cell movement of the virus (By similarity).</text>
</comment>
<comment type="PTM">
    <text evidence="1">Potyviral RNA is expressed as two polyproteins which undergo post-translational proteolytic processing. Genome polyprotein is processed by NIa-pro, P1 and HC-pro proteinases resulting in the production of at least ten individual proteins. P3N-PIPO is cleaved by P1 and HC-pro proteinases resulting in the production of three individual proteins. The P1 proteinase and the HC-pro cleave only their respective C-termini autocatalytically (By similarity).</text>
</comment>
<comment type="miscellaneous">
    <molecule>Isoform P3N-PIPO polyprotein</molecule>
    <text>Produced by -1 ribosomal frameshifting in P3 ORF.</text>
</comment>
<comment type="similarity">
    <text evidence="6">Belongs to the potyviridae P3N-PIPO polyprotein family.</text>
</comment>
<protein>
    <recommendedName>
        <fullName>P3N-PIPO polyprotein</fullName>
    </recommendedName>
    <component>
        <recommendedName>
            <fullName>P1 protease</fullName>
            <ecNumber>3.4.21.-</ecNumber>
        </recommendedName>
        <alternativeName>
            <fullName>N-terminal protein</fullName>
        </alternativeName>
        <alternativeName>
            <fullName>P1 proteinase</fullName>
        </alternativeName>
    </component>
    <component>
        <recommendedName>
            <fullName>Helper component proteinase</fullName>
            <shortName>HC-pro</shortName>
            <ecNumber>3.4.22.45</ecNumber>
        </recommendedName>
    </component>
    <component>
        <recommendedName>
            <fullName>Movement protein P3N-PIPO</fullName>
        </recommendedName>
        <alternativeName>
            <fullName>Pretty interesting potyviridae ORF</fullName>
            <shortName>PIPO</shortName>
        </alternativeName>
    </component>
</protein>
<proteinExistence type="inferred from homology"/>
<evidence type="ECO:0000250" key="1"/>
<evidence type="ECO:0000250" key="2">
    <source>
        <dbReference type="UniProtKB" id="P04517"/>
    </source>
</evidence>
<evidence type="ECO:0000250" key="3">
    <source>
        <dbReference type="UniProtKB" id="P0CK11"/>
    </source>
</evidence>
<evidence type="ECO:0000255" key="4">
    <source>
        <dbReference type="PROSITE-ProRule" id="PRU01080"/>
    </source>
</evidence>
<evidence type="ECO:0000255" key="5">
    <source>
        <dbReference type="PROSITE-ProRule" id="PRU01219"/>
    </source>
</evidence>
<evidence type="ECO:0000305" key="6"/>
<keyword id="KW-1031">Host cell junction</keyword>
<keyword id="KW-0945">Host-virus interaction</keyword>
<keyword id="KW-0378">Hydrolase</keyword>
<keyword id="KW-1090">Inhibition of host innate immune response by virus</keyword>
<keyword id="KW-0645">Protease</keyword>
<keyword id="KW-0688">Ribosomal frameshifting</keyword>
<keyword id="KW-0720">Serine protease</keyword>
<keyword id="KW-0941">Suppressor of RNA silencing</keyword>
<keyword id="KW-0813">Transport</keyword>
<keyword id="KW-0899">Viral immunoevasion</keyword>
<keyword id="KW-0916">Viral movement protein</keyword>
<sequence length="1228" mass="140607">MSSLYTLRAAAQYDRRLESKKGSGWVEHKLERKGERGNTHYCSEFDISKGAKILQLVQIGNTEVGRTFLEGNRFVRANIFEIIRKTMVGRLGYDFESELWVCRNCDKTSEKYFKKCDCGETYYYSERNLMRTMNDLMYQFDMTPSEINSVDLEYLANAVDYAEQLVKRSQVPEPVELAMMEPIVASGEGILMVSEPEVMPVTTKVEEAWTIQIGEIPVPLVVIKETPVISGVEGTLNSTGFSLEADITKLVEKEILQEEVKEAVHLALEVGNEIAEKKPELKLIPYWSASLELHKRIRKHKEHAKIAAIQVQKEREKDQKVFSALELRLNLKSRRRNQAVVCDKRGTLKWETQRGHKKSKLMQQASDFVVTQIHCDFGCKTQYSEPHIPGIKQSTSKKICKPRKHSRIVGNSKINYIMKNLCDTIIERGIPVELVTKRCKRRILQKEGRSYVQLRHMNGIRARQDVSSSPDMELLFTQFCKFLVGHKPLKSKNLTFGSSGLIFKPKFADNVGRYFGDYFVVRGRLGGKLFDGRSKLARSVYAKMDQYNDVAEKFWLGFNRAFLRHRKPTDHTCTSDMDVTMCGEVAALATIILFPCHKITCNTCMSKVKGRVIDEVGEDLNCELERLRETLSAYGGSFGHVSTLLDQLNRVLNARNMNDGAFKEIAKKIDEKKESPWTHMTTINNTLYKGSLATGYEFERASNSLREIVRWHLKRTESIKAGSVESFRNKRSGKAHFNPALTCDNQLDKNGNFLWGERQYHAKRFFANYFEKIDHSKGYEYYSQRQNPNGIRKIAIGNLVFSTNLERFRQQMVEHHIDQGPITRECIALRNNNYVHVCSCVTLDDGTPATSELKTPTKNHIVLGNSGDPKYVDLPTLESDSMYIAKKGYCYMNIFLAMLINIPENEAKDFTKRVRDLVGSKLGEWPTMLDVATCANQLVVFHPDAANAELPQILVDHRQKTMHVIDSFGSVDSGYHILKANTVNQLIQFARDPLDSEMKHYIVGGEFDPTTNCLHQLIRVIYKPHELRSLLRNEPYLIVIALMSPSVLLTLFNSGAVEHALNYWIKRDQDVVEVIVLVEQLCRKVTLARTILEQFNEIRQNARDLHELMDRNNKPWISYDRSLELLSVYANSQLTDEGLLKQGFSTLDPRLREAVEKNLRHSFAGRMACVKFVSKVALKVLCVQITTVFFRVFKAKRARRFKNCIRLLTEILCTRGRKSVPTASQGWG</sequence>
<organismHost>
    <name type="scientific">Carica papaya</name>
    <name type="common">Papaya</name>
    <dbReference type="NCBI Taxonomy" id="3649"/>
</organismHost>
<accession>P0CJ98</accession>
<name>MVP_PRSVH</name>
<reference key="1">
    <citation type="journal article" date="1994" name="Phytopathology">
        <title>Comparison of the nuclear inclusion b protein and coat protein genes of five papaya ringspot virus strains distinct in geographic origin and pathogenicity.</title>
        <authorList>
            <person name="Wang C.H."/>
            <person name="Bau H.J."/>
            <person name="Yeh S.D."/>
        </authorList>
        <dbReference type="AGRICOLA" id="IND20450567"/>
    </citation>
    <scope>NUCLEOTIDE SEQUENCE [GENOMIC RNA]</scope>
</reference>
<reference key="2">
    <citation type="journal article" date="1992" name="J. Gen. Virol.">
        <title>Complete nucleotide sequence and genetic organization of papaya ringspot virus RNA.</title>
        <authorList>
            <person name="Yeh S.D."/>
            <person name="Jan F.J."/>
            <person name="Chiang C.H."/>
            <person name="Doong T.J."/>
            <person name="Chen M.C."/>
            <person name="Chung P.H."/>
            <person name="Bau H.J."/>
        </authorList>
    </citation>
    <scope>NUCLEOTIDE SEQUENCE [GENOMIC RNA]</scope>
</reference>
<organism>
    <name type="scientific">Papaya ringspot virus (strain P / mutant HA)</name>
    <dbReference type="NCBI Taxonomy" id="31731"/>
    <lineage>
        <taxon>Viruses</taxon>
        <taxon>Riboviria</taxon>
        <taxon>Orthornavirae</taxon>
        <taxon>Pisuviricota</taxon>
        <taxon>Stelpaviricetes</taxon>
        <taxon>Patatavirales</taxon>
        <taxon>Potyviridae</taxon>
        <taxon>Potyvirus</taxon>
        <taxon>Potyvirus papayanuli</taxon>
        <taxon>Papaya ringspot virus</taxon>
    </lineage>
</organism>